<keyword id="KW-0328">Glycosyltransferase</keyword>
<keyword id="KW-0460">Magnesium</keyword>
<keyword id="KW-0479">Metal-binding</keyword>
<keyword id="KW-0808">Transferase</keyword>
<comment type="function">
    <text evidence="1">Catalyzes the transfer of a N-acetyl-glucosamine moiety to 1D-myo-inositol 3-phosphate to produce 1D-myo-inositol 2-acetamido-2-deoxy-glucopyranoside 3-phosphate in the mycothiol biosynthesis pathway.</text>
</comment>
<comment type="catalytic activity">
    <reaction evidence="1">
        <text>1D-myo-inositol 3-phosphate + UDP-N-acetyl-alpha-D-glucosamine = 1D-myo-inositol 2-acetamido-2-deoxy-alpha-D-glucopyranoside 3-phosphate + UDP + H(+)</text>
        <dbReference type="Rhea" id="RHEA:26188"/>
        <dbReference type="ChEBI" id="CHEBI:15378"/>
        <dbReference type="ChEBI" id="CHEBI:57705"/>
        <dbReference type="ChEBI" id="CHEBI:58223"/>
        <dbReference type="ChEBI" id="CHEBI:58401"/>
        <dbReference type="ChEBI" id="CHEBI:58892"/>
        <dbReference type="EC" id="2.4.1.250"/>
    </reaction>
</comment>
<comment type="subunit">
    <text evidence="1">Homodimer.</text>
</comment>
<comment type="similarity">
    <text evidence="1">Belongs to the glycosyltransferase group 1 family. MshA subfamily.</text>
</comment>
<sequence>MRLATDPAGSSSGLPQPRRVAVLSVHTSPLAQPGTGDAGGMNVYVLQTSLELARRGVEVEIFTRATSSADQPIVSVAPGVVVRNVVAGPFEGLDKNDLPTQLCAFTAGVLRAEATHEPGYYDILHSHYWLSGQVGWLAADRWAVPLVHTAHTLAAVKNASLAAGDTPEPPMRAIGEQQVVDEADRLIVNTEHEAQQLVSLHHADPGRIDVVHPGVDLATFTPGDRAAARAALGLDPAARIVAFVGRIQPLKAPDVLLRAAALLPDVHVVIAGGPSGSGMATPDNLVHLAGELGIAERVTFLPPQSRDHLVRVYRAADIVAVPSHNESFGLVAVEAQACGTPVVAAAVGGLPVAVRDGVSGALVHSHEPDAWATTLGEVFAADPSTFGRAAVDHAATFSWAHTVDALLTGYGRAIADHRADNTLQVAARRSGRRFSMRRGVRA</sequence>
<accession>A4T324</accession>
<gene>
    <name evidence="1" type="primary">mshA</name>
    <name type="ordered locus">Mflv_0086</name>
</gene>
<feature type="chain" id="PRO_0000400134" description="D-inositol 3-phosphate glycosyltransferase">
    <location>
        <begin position="1"/>
        <end position="442"/>
    </location>
</feature>
<feature type="binding site" evidence="1">
    <location>
        <position position="26"/>
    </location>
    <ligand>
        <name>1D-myo-inositol 3-phosphate</name>
        <dbReference type="ChEBI" id="CHEBI:58401"/>
    </ligand>
</feature>
<feature type="binding site" evidence="1">
    <location>
        <begin position="32"/>
        <end position="33"/>
    </location>
    <ligand>
        <name>UDP-N-acetyl-alpha-D-glucosamine</name>
        <dbReference type="ChEBI" id="CHEBI:57705"/>
    </ligand>
</feature>
<feature type="binding site" evidence="1">
    <location>
        <begin position="37"/>
        <end position="42"/>
    </location>
    <ligand>
        <name>1D-myo-inositol 3-phosphate</name>
        <dbReference type="ChEBI" id="CHEBI:58401"/>
    </ligand>
</feature>
<feature type="binding site" evidence="1">
    <location>
        <position position="40"/>
    </location>
    <ligand>
        <name>UDP-N-acetyl-alpha-D-glucosamine</name>
        <dbReference type="ChEBI" id="CHEBI:57705"/>
    </ligand>
</feature>
<feature type="binding site" evidence="1">
    <location>
        <position position="95"/>
    </location>
    <ligand>
        <name>1D-myo-inositol 3-phosphate</name>
        <dbReference type="ChEBI" id="CHEBI:58401"/>
    </ligand>
</feature>
<feature type="binding site" evidence="1">
    <location>
        <position position="128"/>
    </location>
    <ligand>
        <name>1D-myo-inositol 3-phosphate</name>
        <dbReference type="ChEBI" id="CHEBI:58401"/>
    </ligand>
</feature>
<feature type="binding site" evidence="1">
    <location>
        <position position="152"/>
    </location>
    <ligand>
        <name>1D-myo-inositol 3-phosphate</name>
        <dbReference type="ChEBI" id="CHEBI:58401"/>
    </ligand>
</feature>
<feature type="binding site" evidence="1">
    <location>
        <position position="172"/>
    </location>
    <ligand>
        <name>1D-myo-inositol 3-phosphate</name>
        <dbReference type="ChEBI" id="CHEBI:58401"/>
    </ligand>
</feature>
<feature type="binding site" evidence="1">
    <location>
        <position position="246"/>
    </location>
    <ligand>
        <name>UDP-N-acetyl-alpha-D-glucosamine</name>
        <dbReference type="ChEBI" id="CHEBI:57705"/>
    </ligand>
</feature>
<feature type="binding site" evidence="1">
    <location>
        <position position="251"/>
    </location>
    <ligand>
        <name>UDP-N-acetyl-alpha-D-glucosamine</name>
        <dbReference type="ChEBI" id="CHEBI:57705"/>
    </ligand>
</feature>
<feature type="binding site" evidence="1">
    <location>
        <position position="304"/>
    </location>
    <ligand>
        <name>UDP-N-acetyl-alpha-D-glucosamine</name>
        <dbReference type="ChEBI" id="CHEBI:57705"/>
    </ligand>
</feature>
<feature type="binding site" evidence="1">
    <location>
        <position position="313"/>
    </location>
    <ligand>
        <name>Mg(2+)</name>
        <dbReference type="ChEBI" id="CHEBI:18420"/>
    </ligand>
</feature>
<feature type="binding site" evidence="1">
    <location>
        <position position="314"/>
    </location>
    <ligand>
        <name>Mg(2+)</name>
        <dbReference type="ChEBI" id="CHEBI:18420"/>
    </ligand>
</feature>
<feature type="binding site" evidence="1">
    <location>
        <position position="316"/>
    </location>
    <ligand>
        <name>Mg(2+)</name>
        <dbReference type="ChEBI" id="CHEBI:18420"/>
    </ligand>
</feature>
<feature type="binding site" evidence="1">
    <location>
        <position position="326"/>
    </location>
    <ligand>
        <name>UDP-N-acetyl-alpha-D-glucosamine</name>
        <dbReference type="ChEBI" id="CHEBI:57705"/>
    </ligand>
</feature>
<feature type="binding site" evidence="1">
    <location>
        <position position="334"/>
    </location>
    <ligand>
        <name>UDP-N-acetyl-alpha-D-glucosamine</name>
        <dbReference type="ChEBI" id="CHEBI:57705"/>
    </ligand>
</feature>
<feature type="binding site" evidence="1">
    <location>
        <position position="340"/>
    </location>
    <ligand>
        <name>Mg(2+)</name>
        <dbReference type="ChEBI" id="CHEBI:18420"/>
    </ligand>
</feature>
<proteinExistence type="inferred from homology"/>
<protein>
    <recommendedName>
        <fullName>D-inositol 3-phosphate glycosyltransferase</fullName>
        <ecNumber evidence="1">2.4.1.250</ecNumber>
    </recommendedName>
    <alternativeName>
        <fullName evidence="1">N-acetylglucosamine-inositol-phosphate N-acetylglucosaminyltransferase</fullName>
        <shortName evidence="1">GlcNAc-Ins-P N-acetylglucosaminyltransferase</shortName>
    </alternativeName>
</protein>
<organism>
    <name type="scientific">Mycolicibacterium gilvum (strain PYR-GCK)</name>
    <name type="common">Mycobacterium gilvum (strain PYR-GCK)</name>
    <dbReference type="NCBI Taxonomy" id="350054"/>
    <lineage>
        <taxon>Bacteria</taxon>
        <taxon>Bacillati</taxon>
        <taxon>Actinomycetota</taxon>
        <taxon>Actinomycetes</taxon>
        <taxon>Mycobacteriales</taxon>
        <taxon>Mycobacteriaceae</taxon>
        <taxon>Mycolicibacterium</taxon>
    </lineage>
</organism>
<reference key="1">
    <citation type="submission" date="2007-04" db="EMBL/GenBank/DDBJ databases">
        <title>Complete sequence of chromosome of Mycobacterium gilvum PYR-GCK.</title>
        <authorList>
            <consortium name="US DOE Joint Genome Institute"/>
            <person name="Copeland A."/>
            <person name="Lucas S."/>
            <person name="Lapidus A."/>
            <person name="Barry K."/>
            <person name="Detter J.C."/>
            <person name="Glavina del Rio T."/>
            <person name="Hammon N."/>
            <person name="Israni S."/>
            <person name="Dalin E."/>
            <person name="Tice H."/>
            <person name="Pitluck S."/>
            <person name="Chain P."/>
            <person name="Malfatti S."/>
            <person name="Shin M."/>
            <person name="Vergez L."/>
            <person name="Schmutz J."/>
            <person name="Larimer F."/>
            <person name="Land M."/>
            <person name="Hauser L."/>
            <person name="Kyrpides N."/>
            <person name="Mikhailova N."/>
            <person name="Miller C."/>
            <person name="Richardson P."/>
        </authorList>
    </citation>
    <scope>NUCLEOTIDE SEQUENCE [LARGE SCALE GENOMIC DNA]</scope>
    <source>
        <strain>PYR-GCK</strain>
    </source>
</reference>
<dbReference type="EC" id="2.4.1.250" evidence="1"/>
<dbReference type="EMBL" id="CP000656">
    <property type="protein sequence ID" value="ABP42582.1"/>
    <property type="molecule type" value="Genomic_DNA"/>
</dbReference>
<dbReference type="SMR" id="A4T324"/>
<dbReference type="STRING" id="350054.Mflv_0086"/>
<dbReference type="CAZy" id="GT4">
    <property type="family name" value="Glycosyltransferase Family 4"/>
</dbReference>
<dbReference type="KEGG" id="mgi:Mflv_0086"/>
<dbReference type="eggNOG" id="COG0438">
    <property type="taxonomic scope" value="Bacteria"/>
</dbReference>
<dbReference type="HOGENOM" id="CLU_009583_2_3_11"/>
<dbReference type="OrthoDB" id="9810929at2"/>
<dbReference type="GO" id="GO:0008375">
    <property type="term" value="F:acetylglucosaminyltransferase activity"/>
    <property type="evidence" value="ECO:0007669"/>
    <property type="project" value="UniProtKB-UniRule"/>
</dbReference>
<dbReference type="GO" id="GO:0102710">
    <property type="term" value="F:D-inositol-3-phosphate glycosyltransferase activity"/>
    <property type="evidence" value="ECO:0007669"/>
    <property type="project" value="UniProtKB-EC"/>
</dbReference>
<dbReference type="GO" id="GO:0000287">
    <property type="term" value="F:magnesium ion binding"/>
    <property type="evidence" value="ECO:0007669"/>
    <property type="project" value="UniProtKB-UniRule"/>
</dbReference>
<dbReference type="GO" id="GO:0010125">
    <property type="term" value="P:mycothiol biosynthetic process"/>
    <property type="evidence" value="ECO:0007669"/>
    <property type="project" value="UniProtKB-UniRule"/>
</dbReference>
<dbReference type="Gene3D" id="3.40.50.2000">
    <property type="entry name" value="Glycogen Phosphorylase B"/>
    <property type="match status" value="2"/>
</dbReference>
<dbReference type="HAMAP" id="MF_01695">
    <property type="entry name" value="MshA"/>
    <property type="match status" value="1"/>
</dbReference>
<dbReference type="InterPro" id="IPR001296">
    <property type="entry name" value="Glyco_trans_1"/>
</dbReference>
<dbReference type="InterPro" id="IPR028098">
    <property type="entry name" value="Glyco_trans_4-like_N"/>
</dbReference>
<dbReference type="InterPro" id="IPR017814">
    <property type="entry name" value="Mycothiol_biosynthesis_MshA"/>
</dbReference>
<dbReference type="NCBIfam" id="TIGR03449">
    <property type="entry name" value="mycothiol_MshA"/>
    <property type="match status" value="1"/>
</dbReference>
<dbReference type="PANTHER" id="PTHR12526:SF510">
    <property type="entry name" value="D-INOSITOL 3-PHOSPHATE GLYCOSYLTRANSFERASE"/>
    <property type="match status" value="1"/>
</dbReference>
<dbReference type="PANTHER" id="PTHR12526">
    <property type="entry name" value="GLYCOSYLTRANSFERASE"/>
    <property type="match status" value="1"/>
</dbReference>
<dbReference type="Pfam" id="PF13579">
    <property type="entry name" value="Glyco_trans_4_4"/>
    <property type="match status" value="1"/>
</dbReference>
<dbReference type="Pfam" id="PF00534">
    <property type="entry name" value="Glycos_transf_1"/>
    <property type="match status" value="1"/>
</dbReference>
<dbReference type="SUPFAM" id="SSF53756">
    <property type="entry name" value="UDP-Glycosyltransferase/glycogen phosphorylase"/>
    <property type="match status" value="1"/>
</dbReference>
<evidence type="ECO:0000255" key="1">
    <source>
        <dbReference type="HAMAP-Rule" id="MF_01695"/>
    </source>
</evidence>
<name>MSHA_MYCGI</name>